<reference key="1">
    <citation type="journal article" date="1983" name="Proc. Natl. Acad. Sci. U.S.A.">
        <title>Complete nucleotide sequence of a French bean storage protein gene: phaseolin.</title>
        <authorList>
            <person name="Slightom J.L."/>
            <person name="Sun S.M."/>
            <person name="Hall T.C."/>
        </authorList>
    </citation>
    <scope>NUCLEOTIDE SEQUENCE [GENOMIC DNA]</scope>
</reference>
<reference key="2">
    <citation type="journal article" date="1986" name="J. Biol. Chem.">
        <title>The glycosylated seed storage proteins of Glycine max and Phaseolus vulgaris. Structural homologies of genes and proteins.</title>
        <authorList>
            <person name="Doyle J.J."/>
            <person name="Schuler M.A."/>
            <person name="Godette W.D."/>
            <person name="Zenger V."/>
            <person name="Beachy R.N."/>
            <person name="Slightom J.L."/>
        </authorList>
    </citation>
    <scope>NUCLEOTIDE SEQUENCE [GENOMIC DNA]</scope>
</reference>
<reference key="3">
    <citation type="journal article" date="1985" name="Nucleic Acids Res.">
        <title>Nucleotide sequences from phaseolin cDNA clones: the major storage proteins from Phaseolus vulgaris are encoded by two unique gene families.</title>
        <authorList>
            <person name="Slightom J.L."/>
            <person name="Drong R.F."/>
            <person name="Klassy R.C."/>
            <person name="Hoffman L.M."/>
        </authorList>
    </citation>
    <scope>NUCLEOTIDE SEQUENCE [MRNA]</scope>
    <source>
        <strain>cv. Tendergreen</strain>
        <tissue>Cotyledon</tissue>
    </source>
</reference>
<reference key="4">
    <citation type="journal article" date="1981" name="Nature">
        <title>Intervening sequences in a plant gene -- comparison of the partial sequence of cDNA and genomic DNA of French bean phaseolin.</title>
        <authorList>
            <person name="Sun S.M."/>
            <person name="Slightom J.L."/>
            <person name="Hall T.C."/>
        </authorList>
    </citation>
    <scope>NUCLEOTIDE SEQUENCE [GENOMIC DNA] OF 142-322</scope>
</reference>
<reference key="5">
    <citation type="journal article" date="1995" name="Proc. Natl. Acad. Sci. U.S.A.">
        <title>Identification of presumed ancestral DNA sequences of phaseolin in Phaseolus vulgaris.</title>
        <authorList>
            <person name="Kami J."/>
            <person name="Velasquez V.B."/>
            <person name="Debouck D.G."/>
            <person name="Gepts P."/>
        </authorList>
    </citation>
    <scope>NUCLEOTIDE SEQUENCE [GENOMIC DNA] OF 194-221</scope>
</reference>
<reference key="6">
    <citation type="journal article" date="1990" name="EMBO J.">
        <title>The three-dimensional structure of the seed storage protein phaseolin at 3-A resolution.</title>
        <authorList>
            <person name="Lawrence M.C."/>
            <person name="Suzuki E."/>
            <person name="Varghese J.N."/>
            <person name="Davis P.C."/>
            <person name="van Donkelaar A."/>
            <person name="Tuloch P.A."/>
            <person name="Colman P.M."/>
        </authorList>
    </citation>
    <scope>X-RAY CRYSTALLOGRAPHY (3.0 ANGSTROMS)</scope>
</reference>
<reference key="7">
    <citation type="journal article" date="1994" name="J. Mol. Biol.">
        <title>Structure of phaseolin at 2.2-A resolution. Implications for a common vicilin/legumin structure and the genetic engineering of seed storage proteins.</title>
        <authorList>
            <person name="Lawrence M.C."/>
            <person name="Izard T."/>
            <person name="Beuchat M."/>
            <person name="Blagrove R.J."/>
            <person name="Colman P.M."/>
        </authorList>
    </citation>
    <scope>X-RAY CRYSTALLOGRAPHY (2.2 ANGSTROMS)</scope>
</reference>
<evidence type="ECO:0000255" key="1"/>
<evidence type="ECO:0000305" key="2"/>
<evidence type="ECO:0007829" key="3">
    <source>
        <dbReference type="PDB" id="2PHL"/>
    </source>
</evidence>
<dbReference type="EMBL" id="J01263">
    <property type="protein sequence ID" value="AAC23610.1"/>
    <property type="status" value="ALT_SEQ"/>
    <property type="molecule type" value="Genomic_DNA"/>
</dbReference>
<dbReference type="EMBL" id="X03004">
    <property type="protein sequence ID" value="CAA26789.1"/>
    <property type="molecule type" value="mRNA"/>
</dbReference>
<dbReference type="EMBL" id="V01163">
    <property type="protein sequence ID" value="CAA24492.1"/>
    <property type="status" value="ALT_INIT"/>
    <property type="molecule type" value="Genomic_DNA"/>
</dbReference>
<dbReference type="EMBL" id="S74637">
    <property type="protein sequence ID" value="AAP31811.1"/>
    <property type="molecule type" value="Genomic_DNA"/>
</dbReference>
<dbReference type="PIR" id="A03343">
    <property type="entry name" value="FSFB"/>
</dbReference>
<dbReference type="PIR" id="A24810">
    <property type="entry name" value="A24810"/>
</dbReference>
<dbReference type="RefSeq" id="XP_068490218.1">
    <property type="nucleotide sequence ID" value="XM_068634117.1"/>
</dbReference>
<dbReference type="PDB" id="1PHS">
    <property type="method" value="X-ray"/>
    <property type="resolution" value="3.00 A"/>
    <property type="chains" value="A=25-421"/>
</dbReference>
<dbReference type="PDB" id="2PHL">
    <property type="method" value="X-ray"/>
    <property type="resolution" value="2.20 A"/>
    <property type="chains" value="A/B/C=25-421"/>
</dbReference>
<dbReference type="PDBsum" id="1PHS"/>
<dbReference type="PDBsum" id="2PHL"/>
<dbReference type="SMR" id="P02853"/>
<dbReference type="Allergome" id="8837">
    <property type="allergen name" value="Pha v Phaseolin"/>
</dbReference>
<dbReference type="GlyConnect" id="494">
    <property type="glycosylation" value="3 N-Linked glycans (2 sites)"/>
</dbReference>
<dbReference type="GeneID" id="137827796"/>
<dbReference type="EvolutionaryTrace" id="P02853"/>
<dbReference type="GO" id="GO:0033095">
    <property type="term" value="C:aleurone grain"/>
    <property type="evidence" value="ECO:0007669"/>
    <property type="project" value="UniProtKB-SubCell"/>
</dbReference>
<dbReference type="GO" id="GO:0005773">
    <property type="term" value="C:vacuole"/>
    <property type="evidence" value="ECO:0007669"/>
    <property type="project" value="UniProtKB-SubCell"/>
</dbReference>
<dbReference type="GO" id="GO:0045735">
    <property type="term" value="F:nutrient reservoir activity"/>
    <property type="evidence" value="ECO:0007669"/>
    <property type="project" value="UniProtKB-KW"/>
</dbReference>
<dbReference type="CDD" id="cd02244">
    <property type="entry name" value="cupin_7S_vicilin-like_N"/>
    <property type="match status" value="1"/>
</dbReference>
<dbReference type="Gene3D" id="2.60.120.10">
    <property type="entry name" value="Jelly Rolls"/>
    <property type="match status" value="2"/>
</dbReference>
<dbReference type="InterPro" id="IPR006045">
    <property type="entry name" value="Cupin_1"/>
</dbReference>
<dbReference type="InterPro" id="IPR014710">
    <property type="entry name" value="RmlC-like_jellyroll"/>
</dbReference>
<dbReference type="InterPro" id="IPR011051">
    <property type="entry name" value="RmlC_Cupin_sf"/>
</dbReference>
<dbReference type="InterPro" id="IPR050253">
    <property type="entry name" value="Seed_Storage-Functional"/>
</dbReference>
<dbReference type="PANTHER" id="PTHR31189">
    <property type="entry name" value="OS03G0336100 PROTEIN-RELATED"/>
    <property type="match status" value="1"/>
</dbReference>
<dbReference type="PANTHER" id="PTHR31189:SF41">
    <property type="entry name" value="VICILIN C72"/>
    <property type="match status" value="1"/>
</dbReference>
<dbReference type="Pfam" id="PF00190">
    <property type="entry name" value="Cupin_1"/>
    <property type="match status" value="1"/>
</dbReference>
<dbReference type="SMART" id="SM00835">
    <property type="entry name" value="Cupin_1"/>
    <property type="match status" value="1"/>
</dbReference>
<dbReference type="SUPFAM" id="SSF51182">
    <property type="entry name" value="RmlC-like cupins"/>
    <property type="match status" value="2"/>
</dbReference>
<keyword id="KW-0002">3D-structure</keyword>
<keyword id="KW-0325">Glycoprotein</keyword>
<keyword id="KW-0708">Seed storage protein</keyword>
<keyword id="KW-0732">Signal</keyword>
<keyword id="KW-0758">Storage protein</keyword>
<keyword id="KW-0926">Vacuole</keyword>
<name>PHSB_PHAVU</name>
<feature type="signal peptide" evidence="1">
    <location>
        <begin position="1"/>
        <end position="24"/>
    </location>
</feature>
<feature type="chain" id="PRO_0000032195" description="Phaseolin, beta-type">
    <location>
        <begin position="25"/>
        <end position="421"/>
    </location>
</feature>
<feature type="domain" description="Cupin type-1" evidence="1">
    <location>
        <begin position="237"/>
        <end position="390"/>
    </location>
</feature>
<feature type="glycosylation site" id="CAR_000078" description="N-linked (GlcNAc...) asparagine">
    <location>
        <position position="252"/>
    </location>
</feature>
<feature type="glycosylation site" id="CAR_000079" description="N-linked (GlcNAc...) asparagine">
    <location>
        <position position="341"/>
    </location>
</feature>
<feature type="sequence conflict" description="In Ref. 5; AAP31811." evidence="2" ref="5">
    <original>FN</original>
    <variation>SM</variation>
    <location>
        <begin position="194"/>
        <end position="195"/>
    </location>
</feature>
<feature type="sequence conflict" description="In Ref. 4; CAA24492." evidence="2" ref="4">
    <original>L</original>
    <variation>P</variation>
    <location>
        <position position="205"/>
    </location>
</feature>
<feature type="sequence conflict" description="In Ref. 4; CAA24492." evidence="2" ref="4">
    <original>L</original>
    <variation>Q</variation>
    <location>
        <position position="227"/>
    </location>
</feature>
<feature type="sequence conflict" description="In Ref. 4; CAA24492." evidence="2" ref="4">
    <original>L</original>
    <variation>P</variation>
    <location>
        <position position="239"/>
    </location>
</feature>
<feature type="sequence conflict" description="In Ref. 4; CAA24492." evidence="2" ref="4">
    <original>D</original>
    <variation>G</variation>
    <location>
        <position position="258"/>
    </location>
</feature>
<feature type="sequence conflict" description="In Ref. 3; CAA26789." evidence="2" ref="3">
    <original>Y</original>
    <variation>I</variation>
    <location>
        <position position="311"/>
    </location>
</feature>
<feature type="helix" evidence="3">
    <location>
        <begin position="42"/>
        <end position="44"/>
    </location>
</feature>
<feature type="strand" evidence="3">
    <location>
        <begin position="46"/>
        <end position="52"/>
    </location>
</feature>
<feature type="strand" evidence="3">
    <location>
        <begin position="55"/>
        <end position="60"/>
    </location>
</feature>
<feature type="helix" evidence="3">
    <location>
        <begin position="63"/>
        <end position="66"/>
    </location>
</feature>
<feature type="helix" evidence="3">
    <location>
        <begin position="68"/>
        <end position="73"/>
    </location>
</feature>
<feature type="strand" evidence="3">
    <location>
        <begin position="77"/>
        <end position="83"/>
    </location>
</feature>
<feature type="strand" evidence="3">
    <location>
        <begin position="85"/>
        <end position="113"/>
    </location>
</feature>
<feature type="turn" evidence="3">
    <location>
        <begin position="114"/>
        <end position="116"/>
    </location>
</feature>
<feature type="strand" evidence="3">
    <location>
        <begin position="117"/>
        <end position="126"/>
    </location>
</feature>
<feature type="strand" evidence="3">
    <location>
        <begin position="132"/>
        <end position="136"/>
    </location>
</feature>
<feature type="strand" evidence="3">
    <location>
        <begin position="141"/>
        <end position="146"/>
    </location>
</feature>
<feature type="strand" evidence="3">
    <location>
        <begin position="153"/>
        <end position="166"/>
    </location>
</feature>
<feature type="strand" evidence="3">
    <location>
        <begin position="169"/>
        <end position="171"/>
    </location>
</feature>
<feature type="helix" evidence="3">
    <location>
        <begin position="181"/>
        <end position="184"/>
    </location>
</feature>
<feature type="helix" evidence="3">
    <location>
        <begin position="187"/>
        <end position="194"/>
    </location>
</feature>
<feature type="helix" evidence="3">
    <location>
        <begin position="198"/>
        <end position="205"/>
    </location>
</feature>
<feature type="strand" evidence="3">
    <location>
        <begin position="212"/>
        <end position="218"/>
    </location>
</feature>
<feature type="turn" evidence="3">
    <location>
        <begin position="221"/>
        <end position="223"/>
    </location>
</feature>
<feature type="helix" evidence="3">
    <location>
        <begin position="224"/>
        <end position="232"/>
    </location>
</feature>
<feature type="strand" evidence="3">
    <location>
        <begin position="245"/>
        <end position="248"/>
    </location>
</feature>
<feature type="strand" evidence="3">
    <location>
        <begin position="251"/>
        <end position="258"/>
    </location>
</feature>
<feature type="turn" evidence="3">
    <location>
        <begin position="259"/>
        <end position="262"/>
    </location>
</feature>
<feature type="strand" evidence="3">
    <location>
        <begin position="263"/>
        <end position="270"/>
    </location>
</feature>
<feature type="strand" evidence="3">
    <location>
        <begin position="274"/>
        <end position="283"/>
    </location>
</feature>
<feature type="strand" evidence="3">
    <location>
        <begin position="285"/>
        <end position="302"/>
    </location>
</feature>
<feature type="strand" evidence="3">
    <location>
        <begin position="311"/>
        <end position="319"/>
    </location>
</feature>
<feature type="strand" evidence="3">
    <location>
        <begin position="323"/>
        <end position="326"/>
    </location>
</feature>
<feature type="strand" evidence="3">
    <location>
        <begin position="332"/>
        <end position="348"/>
    </location>
</feature>
<feature type="strand" evidence="3">
    <location>
        <begin position="354"/>
        <end position="363"/>
    </location>
</feature>
<feature type="helix" evidence="3">
    <location>
        <begin position="364"/>
        <end position="369"/>
    </location>
</feature>
<feature type="helix" evidence="3">
    <location>
        <begin position="374"/>
        <end position="381"/>
    </location>
</feature>
<feature type="strand" evidence="3">
    <location>
        <begin position="382"/>
        <end position="384"/>
    </location>
</feature>
<feature type="helix" evidence="3">
    <location>
        <begin position="386"/>
        <end position="393"/>
    </location>
</feature>
<feature type="strand" evidence="3">
    <location>
        <begin position="400"/>
        <end position="403"/>
    </location>
</feature>
<protein>
    <recommendedName>
        <fullName>Phaseolin, beta-type</fullName>
    </recommendedName>
</protein>
<proteinExistence type="evidence at protein level"/>
<accession>P02853</accession>
<accession>P07220</accession>
<accession>Q84N11</accession>
<organism>
    <name type="scientific">Phaseolus vulgaris</name>
    <name type="common">Kidney bean</name>
    <name type="synonym">French bean</name>
    <dbReference type="NCBI Taxonomy" id="3885"/>
    <lineage>
        <taxon>Eukaryota</taxon>
        <taxon>Viridiplantae</taxon>
        <taxon>Streptophyta</taxon>
        <taxon>Embryophyta</taxon>
        <taxon>Tracheophyta</taxon>
        <taxon>Spermatophyta</taxon>
        <taxon>Magnoliopsida</taxon>
        <taxon>eudicotyledons</taxon>
        <taxon>Gunneridae</taxon>
        <taxon>Pentapetalae</taxon>
        <taxon>rosids</taxon>
        <taxon>fabids</taxon>
        <taxon>Fabales</taxon>
        <taxon>Fabaceae</taxon>
        <taxon>Papilionoideae</taxon>
        <taxon>50 kb inversion clade</taxon>
        <taxon>NPAAA clade</taxon>
        <taxon>indigoferoid/millettioid clade</taxon>
        <taxon>Phaseoleae</taxon>
        <taxon>Phaseolus</taxon>
    </lineage>
</organism>
<sequence>MMRARVPLLLLGILFLASLSASFATSLREEEESQDNPFYFNSDNSWNTLFKNQYGHIRVLQRFDQQSKRLQNLEDYRLVEFRSKPETLLLPQQADAELLLVVRSGSAILVLVKPDDRREYFFLTSDNPIFSDHQKIPAGTIFYLVNPDPKEDLRIIQLAMPVNNPQIHEFFLSSTEAQQSYLQEFSKHILEASFNSKFEEINRVLFEEEGQQEGVIVNIDSEQIKELSKHAKSSSRKSLSKQDNTIGNEFGNLTERTDNSLNVLISSIEMEEGALFVPHYYSKAIVILVVNEGEAHVELVGPKGNKETLEYESYRAELSKDDVFVIPAAYPVAIKATSNVNFTGFGINANNNNRNLLAGKTDNVISSIGRALDGKDVLGLTFSGSGDEVMKLINKQSGSYFVDAHHHQQEQQKGRKGAFVY</sequence>
<comment type="function">
    <text>Major seed storage protein.</text>
</comment>
<comment type="subunit">
    <text>Homotrimer that associates to form a dodecamer.</text>
</comment>
<comment type="subcellular location">
    <subcellularLocation>
        <location>Vacuole</location>
        <location>Aleurone grain</location>
    </subcellularLocation>
    <subcellularLocation>
        <location>Vacuole</location>
    </subcellularLocation>
    <text>Cotyledonary membrane-bound vacuolar protein bodies.</text>
</comment>
<comment type="similarity">
    <text evidence="2">Belongs to the 7S seed storage protein family.</text>
</comment>
<comment type="sequence caution" evidence="2">
    <conflict type="erroneous gene model prediction">
        <sequence resource="EMBL-CDS" id="AAC23610"/>
    </conflict>
</comment>
<comment type="sequence caution" evidence="2">
    <conflict type="erroneous initiation">
        <sequence resource="EMBL-CDS" id="CAA24492"/>
    </conflict>
</comment>